<organism>
    <name type="scientific">Chloroherpeton thalassium (strain ATCC 35110 / GB-78)</name>
    <dbReference type="NCBI Taxonomy" id="517418"/>
    <lineage>
        <taxon>Bacteria</taxon>
        <taxon>Pseudomonadati</taxon>
        <taxon>Chlorobiota</taxon>
        <taxon>Chlorobiia</taxon>
        <taxon>Chlorobiales</taxon>
        <taxon>Chloroherpetonaceae</taxon>
        <taxon>Chloroherpeton</taxon>
    </lineage>
</organism>
<reference key="1">
    <citation type="submission" date="2008-06" db="EMBL/GenBank/DDBJ databases">
        <title>Complete sequence of Chloroherpeton thalassium ATCC 35110.</title>
        <authorList>
            <consortium name="US DOE Joint Genome Institute"/>
            <person name="Lucas S."/>
            <person name="Copeland A."/>
            <person name="Lapidus A."/>
            <person name="Glavina del Rio T."/>
            <person name="Dalin E."/>
            <person name="Tice H."/>
            <person name="Bruce D."/>
            <person name="Goodwin L."/>
            <person name="Pitluck S."/>
            <person name="Schmutz J."/>
            <person name="Larimer F."/>
            <person name="Land M."/>
            <person name="Hauser L."/>
            <person name="Kyrpides N."/>
            <person name="Mikhailova N."/>
            <person name="Liu Z."/>
            <person name="Li T."/>
            <person name="Zhao F."/>
            <person name="Overmann J."/>
            <person name="Bryant D.A."/>
            <person name="Richardson P."/>
        </authorList>
    </citation>
    <scope>NUCLEOTIDE SEQUENCE [LARGE SCALE GENOMIC DNA]</scope>
    <source>
        <strain>ATCC 35110 / GB-78</strain>
    </source>
</reference>
<sequence>MIYLHNKRKGMLKRLSALIVIGLLMNLPAVFASGGEHAEAAHGDAAHAEAAHGGGAHHDPEKLDAIHHVIDGHEFDFEPFGIVHLPKIEVGGFDISLTRHVVMMWIAAAILLLIMFGVGNQYKKMTKNQAPKGMANLMEVLVDFIRLDVAKQNIGHGYERFMPFLLTIFFFILVCNLIGLVPYSATATGNINVTATLAIFTFLVTQASAIRAHGIGGFLAHLTGGTHPLMWIIMVPVEFIGLFTKPFALTVRLFANMTAGHIVIISLLGLIFVFKTYMIAPVSVAFALFIYLLEILVAFLQAYIFTLLSALFIGMAVAHEDHGDEAHGHAPSH</sequence>
<protein>
    <recommendedName>
        <fullName evidence="2">ATP synthase subunit a</fullName>
    </recommendedName>
    <alternativeName>
        <fullName evidence="2">ATP synthase F0 sector subunit a</fullName>
    </alternativeName>
    <alternativeName>
        <fullName evidence="2">F-ATPase subunit 6</fullName>
    </alternativeName>
</protein>
<feature type="signal peptide" evidence="1">
    <location>
        <begin position="1"/>
        <end position="32"/>
    </location>
</feature>
<feature type="chain" id="PRO_5000378916" description="ATP synthase subunit a">
    <location>
        <begin position="33"/>
        <end position="333"/>
    </location>
</feature>
<feature type="transmembrane region" description="Helical" evidence="2">
    <location>
        <begin position="100"/>
        <end position="120"/>
    </location>
</feature>
<feature type="transmembrane region" description="Helical" evidence="2">
    <location>
        <begin position="161"/>
        <end position="181"/>
    </location>
</feature>
<feature type="transmembrane region" description="Helical" evidence="2">
    <location>
        <begin position="185"/>
        <end position="205"/>
    </location>
</feature>
<feature type="transmembrane region" description="Helical" evidence="2">
    <location>
        <begin position="229"/>
        <end position="249"/>
    </location>
</feature>
<feature type="transmembrane region" description="Helical" evidence="2">
    <location>
        <begin position="254"/>
        <end position="274"/>
    </location>
</feature>
<feature type="transmembrane region" description="Helical" evidence="2">
    <location>
        <begin position="279"/>
        <end position="299"/>
    </location>
</feature>
<feature type="transmembrane region" description="Helical" evidence="2">
    <location>
        <begin position="300"/>
        <end position="320"/>
    </location>
</feature>
<gene>
    <name evidence="2" type="primary">atpB</name>
    <name type="ordered locus">Ctha_1378</name>
</gene>
<proteinExistence type="inferred from homology"/>
<accession>B3QZE8</accession>
<name>ATP6_CHLT3</name>
<dbReference type="EMBL" id="CP001100">
    <property type="protein sequence ID" value="ACF13841.1"/>
    <property type="molecule type" value="Genomic_DNA"/>
</dbReference>
<dbReference type="RefSeq" id="WP_012499925.1">
    <property type="nucleotide sequence ID" value="NC_011026.1"/>
</dbReference>
<dbReference type="SMR" id="B3QZE8"/>
<dbReference type="STRING" id="517418.Ctha_1378"/>
<dbReference type="KEGG" id="cts:Ctha_1378"/>
<dbReference type="eggNOG" id="COG0356">
    <property type="taxonomic scope" value="Bacteria"/>
</dbReference>
<dbReference type="HOGENOM" id="CLU_041018_0_0_10"/>
<dbReference type="OrthoDB" id="9809130at2"/>
<dbReference type="Proteomes" id="UP000001208">
    <property type="component" value="Chromosome"/>
</dbReference>
<dbReference type="GO" id="GO:0005886">
    <property type="term" value="C:plasma membrane"/>
    <property type="evidence" value="ECO:0007669"/>
    <property type="project" value="UniProtKB-SubCell"/>
</dbReference>
<dbReference type="GO" id="GO:0045259">
    <property type="term" value="C:proton-transporting ATP synthase complex"/>
    <property type="evidence" value="ECO:0007669"/>
    <property type="project" value="UniProtKB-KW"/>
</dbReference>
<dbReference type="GO" id="GO:0046933">
    <property type="term" value="F:proton-transporting ATP synthase activity, rotational mechanism"/>
    <property type="evidence" value="ECO:0007669"/>
    <property type="project" value="UniProtKB-UniRule"/>
</dbReference>
<dbReference type="CDD" id="cd00310">
    <property type="entry name" value="ATP-synt_Fo_a_6"/>
    <property type="match status" value="1"/>
</dbReference>
<dbReference type="Gene3D" id="1.20.120.220">
    <property type="entry name" value="ATP synthase, F0 complex, subunit A"/>
    <property type="match status" value="1"/>
</dbReference>
<dbReference type="HAMAP" id="MF_01393">
    <property type="entry name" value="ATP_synth_a_bact"/>
    <property type="match status" value="1"/>
</dbReference>
<dbReference type="InterPro" id="IPR000568">
    <property type="entry name" value="ATP_synth_F0_asu"/>
</dbReference>
<dbReference type="InterPro" id="IPR023011">
    <property type="entry name" value="ATP_synth_F0_asu_AS"/>
</dbReference>
<dbReference type="InterPro" id="IPR045083">
    <property type="entry name" value="ATP_synth_F0_asu_bact/mt"/>
</dbReference>
<dbReference type="InterPro" id="IPR035908">
    <property type="entry name" value="F0_ATP_A_sf"/>
</dbReference>
<dbReference type="NCBIfam" id="TIGR01131">
    <property type="entry name" value="ATP_synt_6_or_A"/>
    <property type="match status" value="1"/>
</dbReference>
<dbReference type="NCBIfam" id="NF009953">
    <property type="entry name" value="PRK13419.1"/>
    <property type="match status" value="1"/>
</dbReference>
<dbReference type="PANTHER" id="PTHR11410">
    <property type="entry name" value="ATP SYNTHASE SUBUNIT A"/>
    <property type="match status" value="1"/>
</dbReference>
<dbReference type="PANTHER" id="PTHR11410:SF0">
    <property type="entry name" value="ATP SYNTHASE SUBUNIT A"/>
    <property type="match status" value="1"/>
</dbReference>
<dbReference type="Pfam" id="PF00119">
    <property type="entry name" value="ATP-synt_A"/>
    <property type="match status" value="1"/>
</dbReference>
<dbReference type="PRINTS" id="PR00123">
    <property type="entry name" value="ATPASEA"/>
</dbReference>
<dbReference type="SUPFAM" id="SSF81336">
    <property type="entry name" value="F1F0 ATP synthase subunit A"/>
    <property type="match status" value="1"/>
</dbReference>
<dbReference type="PROSITE" id="PS00449">
    <property type="entry name" value="ATPASE_A"/>
    <property type="match status" value="1"/>
</dbReference>
<evidence type="ECO:0000255" key="1"/>
<evidence type="ECO:0000255" key="2">
    <source>
        <dbReference type="HAMAP-Rule" id="MF_01393"/>
    </source>
</evidence>
<comment type="function">
    <text evidence="2">Key component of the proton channel; it plays a direct role in the translocation of protons across the membrane.</text>
</comment>
<comment type="subunit">
    <text evidence="2">F-type ATPases have 2 components, CF(1) - the catalytic core - and CF(0) - the membrane proton channel. CF(1) has five subunits: alpha(3), beta(3), gamma(1), delta(1), epsilon(1). CF(0) has four main subunits: a, b, b' and c.</text>
</comment>
<comment type="subcellular location">
    <subcellularLocation>
        <location evidence="2">Cell inner membrane</location>
        <topology evidence="2">Multi-pass membrane protein</topology>
    </subcellularLocation>
</comment>
<comment type="similarity">
    <text evidence="2">Belongs to the ATPase A chain family.</text>
</comment>
<keyword id="KW-0066">ATP synthesis</keyword>
<keyword id="KW-0997">Cell inner membrane</keyword>
<keyword id="KW-1003">Cell membrane</keyword>
<keyword id="KW-0138">CF(0)</keyword>
<keyword id="KW-0375">Hydrogen ion transport</keyword>
<keyword id="KW-0406">Ion transport</keyword>
<keyword id="KW-0472">Membrane</keyword>
<keyword id="KW-1185">Reference proteome</keyword>
<keyword id="KW-0732">Signal</keyword>
<keyword id="KW-0812">Transmembrane</keyword>
<keyword id="KW-1133">Transmembrane helix</keyword>
<keyword id="KW-0813">Transport</keyword>